<sequence length="134" mass="14510">MKSVFTISASLAISLMLCCTAQANDHKLLGVIAMPRNETNDLALKLPVCRIVKRIQLSADHGDLQLSGASVYFKAARSASQSLNIPSEIKEGQTTDWININSDNDNKRCVSKITFSGHTVNSSDMATLKIIGDD</sequence>
<evidence type="ECO:0000255" key="1">
    <source>
        <dbReference type="HAMAP-Rule" id="MF_01372"/>
    </source>
</evidence>
<comment type="similarity">
    <text evidence="1">Belongs to the UPF0412 family.</text>
</comment>
<dbReference type="EMBL" id="CP000038">
    <property type="protein sequence ID" value="AAZ86810.1"/>
    <property type="molecule type" value="Genomic_DNA"/>
</dbReference>
<dbReference type="RefSeq" id="WP_000843568.1">
    <property type="nucleotide sequence ID" value="NC_007384.1"/>
</dbReference>
<dbReference type="KEGG" id="ssn:SSON_0013"/>
<dbReference type="HOGENOM" id="CLU_158661_0_0_6"/>
<dbReference type="Proteomes" id="UP000002529">
    <property type="component" value="Chromosome"/>
</dbReference>
<dbReference type="HAMAP" id="MF_01372">
    <property type="entry name" value="UPF0412"/>
    <property type="match status" value="1"/>
</dbReference>
<dbReference type="InterPro" id="IPR020240">
    <property type="entry name" value="UPF0412_YaaI"/>
</dbReference>
<dbReference type="NCBIfam" id="NF007541">
    <property type="entry name" value="PRK10154.1"/>
    <property type="match status" value="1"/>
</dbReference>
<dbReference type="Pfam" id="PF10807">
    <property type="entry name" value="DUF2541"/>
    <property type="match status" value="1"/>
</dbReference>
<proteinExistence type="inferred from homology"/>
<reference key="1">
    <citation type="journal article" date="2005" name="Nucleic Acids Res.">
        <title>Genome dynamics and diversity of Shigella species, the etiologic agents of bacillary dysentery.</title>
        <authorList>
            <person name="Yang F."/>
            <person name="Yang J."/>
            <person name="Zhang X."/>
            <person name="Chen L."/>
            <person name="Jiang Y."/>
            <person name="Yan Y."/>
            <person name="Tang X."/>
            <person name="Wang J."/>
            <person name="Xiong Z."/>
            <person name="Dong J."/>
            <person name="Xue Y."/>
            <person name="Zhu Y."/>
            <person name="Xu X."/>
            <person name="Sun L."/>
            <person name="Chen S."/>
            <person name="Nie H."/>
            <person name="Peng J."/>
            <person name="Xu J."/>
            <person name="Wang Y."/>
            <person name="Yuan Z."/>
            <person name="Wen Y."/>
            <person name="Yao Z."/>
            <person name="Shen Y."/>
            <person name="Qiang B."/>
            <person name="Hou Y."/>
            <person name="Yu J."/>
            <person name="Jin Q."/>
        </authorList>
    </citation>
    <scope>NUCLEOTIDE SEQUENCE [LARGE SCALE GENOMIC DNA]</scope>
    <source>
        <strain>Ss046</strain>
    </source>
</reference>
<keyword id="KW-1185">Reference proteome</keyword>
<keyword id="KW-0732">Signal</keyword>
<feature type="signal peptide" evidence="1">
    <location>
        <begin position="1"/>
        <end position="23"/>
    </location>
</feature>
<feature type="chain" id="PRO_0000278593" description="UPF0412 protein YaaI">
    <location>
        <begin position="24"/>
        <end position="134"/>
    </location>
</feature>
<protein>
    <recommendedName>
        <fullName evidence="1">UPF0412 protein YaaI</fullName>
    </recommendedName>
</protein>
<accession>Q3Z602</accession>
<gene>
    <name evidence="1" type="primary">yaaI</name>
    <name type="ordered locus">SSON_0013</name>
</gene>
<organism>
    <name type="scientific">Shigella sonnei (strain Ss046)</name>
    <dbReference type="NCBI Taxonomy" id="300269"/>
    <lineage>
        <taxon>Bacteria</taxon>
        <taxon>Pseudomonadati</taxon>
        <taxon>Pseudomonadota</taxon>
        <taxon>Gammaproteobacteria</taxon>
        <taxon>Enterobacterales</taxon>
        <taxon>Enterobacteriaceae</taxon>
        <taxon>Shigella</taxon>
    </lineage>
</organism>
<name>YAAI_SHISS</name>